<gene>
    <name evidence="1" type="primary">nuoH</name>
    <name type="ordered locus">CC_1945</name>
</gene>
<feature type="chain" id="PRO_0000244910" description="NADH-quinone oxidoreductase subunit H">
    <location>
        <begin position="1"/>
        <end position="356"/>
    </location>
</feature>
<feature type="transmembrane region" description="Helical" evidence="1">
    <location>
        <begin position="17"/>
        <end position="37"/>
    </location>
</feature>
<feature type="transmembrane region" description="Helical" evidence="1">
    <location>
        <begin position="51"/>
        <end position="71"/>
    </location>
</feature>
<feature type="transmembrane region" description="Helical" evidence="1">
    <location>
        <begin position="83"/>
        <end position="103"/>
    </location>
</feature>
<feature type="transmembrane region" description="Helical" evidence="1">
    <location>
        <begin position="116"/>
        <end position="136"/>
    </location>
</feature>
<feature type="transmembrane region" description="Helical" evidence="1">
    <location>
        <begin position="162"/>
        <end position="182"/>
    </location>
</feature>
<feature type="transmembrane region" description="Helical" evidence="1">
    <location>
        <begin position="202"/>
        <end position="222"/>
    </location>
</feature>
<feature type="transmembrane region" description="Helical" evidence="1">
    <location>
        <begin position="261"/>
        <end position="281"/>
    </location>
</feature>
<feature type="transmembrane region" description="Helical" evidence="1">
    <location>
        <begin position="295"/>
        <end position="315"/>
    </location>
</feature>
<feature type="transmembrane region" description="Helical" evidence="1">
    <location>
        <begin position="334"/>
        <end position="354"/>
    </location>
</feature>
<comment type="function">
    <text evidence="1">NDH-1 shuttles electrons from NADH, via FMN and iron-sulfur (Fe-S) centers, to quinones in the respiratory chain. The immediate electron acceptor for the enzyme in this species is believed to be ubiquinone. Couples the redox reaction to proton translocation (for every two electrons transferred, four hydrogen ions are translocated across the cytoplasmic membrane), and thus conserves the redox energy in a proton gradient. This subunit may bind ubiquinone.</text>
</comment>
<comment type="catalytic activity">
    <reaction evidence="1">
        <text>a quinone + NADH + 5 H(+)(in) = a quinol + NAD(+) + 4 H(+)(out)</text>
        <dbReference type="Rhea" id="RHEA:57888"/>
        <dbReference type="ChEBI" id="CHEBI:15378"/>
        <dbReference type="ChEBI" id="CHEBI:24646"/>
        <dbReference type="ChEBI" id="CHEBI:57540"/>
        <dbReference type="ChEBI" id="CHEBI:57945"/>
        <dbReference type="ChEBI" id="CHEBI:132124"/>
    </reaction>
</comment>
<comment type="subunit">
    <text evidence="1">NDH-1 is composed of 14 different subunits. Subunits NuoA, H, J, K, L, M, N constitute the membrane sector of the complex.</text>
</comment>
<comment type="subcellular location">
    <subcellularLocation>
        <location evidence="1">Cell inner membrane</location>
        <topology evidence="1">Multi-pass membrane protein</topology>
    </subcellularLocation>
</comment>
<comment type="similarity">
    <text evidence="1">Belongs to the complex I subunit 1 family.</text>
</comment>
<keyword id="KW-0997">Cell inner membrane</keyword>
<keyword id="KW-1003">Cell membrane</keyword>
<keyword id="KW-0472">Membrane</keyword>
<keyword id="KW-0520">NAD</keyword>
<keyword id="KW-0874">Quinone</keyword>
<keyword id="KW-1185">Reference proteome</keyword>
<keyword id="KW-1278">Translocase</keyword>
<keyword id="KW-0812">Transmembrane</keyword>
<keyword id="KW-1133">Transmembrane helix</keyword>
<keyword id="KW-0830">Ubiquinone</keyword>
<sequence length="356" mass="39156">MQAFFANPAVSWTLLTTGGILLVVIWVLLSLAFLLLADRKIWAGVQMRKGPNVVGPFGLLQSFADFFKFVLKEIVIPAGADKVVFILAPLISLILAFVGWAVVPFAPGWVVSNLNVGILYLLAMSSLGVYGIIMGGWASNSKYPFLGALRSAAQMVSYEVSIGLIIITVILLAGSMNLSTIVEKQSGWIWNWNVFGGGLNNLVLLPVMVVAMGMFYISALAETNRPPFDLPEAESELVAGYQVEYSSTPYLLFMVAEYSNIVLMCAMISVLFFGGWNPGFPTDFLSSWHPFAANLFLALVFYAKICFWFFMFAMAKAIVPRYRYDQLMRLGWKVFLPTSLVLVAAVAAWRVFGPAA</sequence>
<organism>
    <name type="scientific">Caulobacter vibrioides (strain ATCC 19089 / CIP 103742 / CB 15)</name>
    <name type="common">Caulobacter crescentus</name>
    <dbReference type="NCBI Taxonomy" id="190650"/>
    <lineage>
        <taxon>Bacteria</taxon>
        <taxon>Pseudomonadati</taxon>
        <taxon>Pseudomonadota</taxon>
        <taxon>Alphaproteobacteria</taxon>
        <taxon>Caulobacterales</taxon>
        <taxon>Caulobacteraceae</taxon>
        <taxon>Caulobacter</taxon>
    </lineage>
</organism>
<dbReference type="EC" id="7.1.1.-" evidence="1"/>
<dbReference type="EMBL" id="AE005673">
    <property type="protein sequence ID" value="AAK23920.1"/>
    <property type="molecule type" value="Genomic_DNA"/>
</dbReference>
<dbReference type="PIR" id="D87490">
    <property type="entry name" value="D87490"/>
</dbReference>
<dbReference type="RefSeq" id="NP_420752.1">
    <property type="nucleotide sequence ID" value="NC_002696.2"/>
</dbReference>
<dbReference type="RefSeq" id="WP_010919811.1">
    <property type="nucleotide sequence ID" value="NC_002696.2"/>
</dbReference>
<dbReference type="SMR" id="Q9A6Y1"/>
<dbReference type="STRING" id="190650.CC_1945"/>
<dbReference type="EnsemblBacteria" id="AAK23920">
    <property type="protein sequence ID" value="AAK23920"/>
    <property type="gene ID" value="CC_1945"/>
</dbReference>
<dbReference type="KEGG" id="ccr:CC_1945"/>
<dbReference type="PATRIC" id="fig|190650.5.peg.1961"/>
<dbReference type="eggNOG" id="COG1005">
    <property type="taxonomic scope" value="Bacteria"/>
</dbReference>
<dbReference type="HOGENOM" id="CLU_015134_0_1_5"/>
<dbReference type="BioCyc" id="CAULO:CC1945-MONOMER"/>
<dbReference type="Proteomes" id="UP000001816">
    <property type="component" value="Chromosome"/>
</dbReference>
<dbReference type="GO" id="GO:0005886">
    <property type="term" value="C:plasma membrane"/>
    <property type="evidence" value="ECO:0007669"/>
    <property type="project" value="UniProtKB-SubCell"/>
</dbReference>
<dbReference type="GO" id="GO:0003954">
    <property type="term" value="F:NADH dehydrogenase activity"/>
    <property type="evidence" value="ECO:0007669"/>
    <property type="project" value="TreeGrafter"/>
</dbReference>
<dbReference type="GO" id="GO:0016655">
    <property type="term" value="F:oxidoreductase activity, acting on NAD(P)H, quinone or similar compound as acceptor"/>
    <property type="evidence" value="ECO:0007669"/>
    <property type="project" value="UniProtKB-UniRule"/>
</dbReference>
<dbReference type="GO" id="GO:0048038">
    <property type="term" value="F:quinone binding"/>
    <property type="evidence" value="ECO:0007669"/>
    <property type="project" value="UniProtKB-KW"/>
</dbReference>
<dbReference type="GO" id="GO:0009060">
    <property type="term" value="P:aerobic respiration"/>
    <property type="evidence" value="ECO:0007669"/>
    <property type="project" value="TreeGrafter"/>
</dbReference>
<dbReference type="HAMAP" id="MF_01350">
    <property type="entry name" value="NDH1_NuoH"/>
    <property type="match status" value="1"/>
</dbReference>
<dbReference type="InterPro" id="IPR001694">
    <property type="entry name" value="NADH_UbQ_OxRdtase_su1/FPO"/>
</dbReference>
<dbReference type="InterPro" id="IPR018086">
    <property type="entry name" value="NADH_UbQ_OxRdtase_su1_CS"/>
</dbReference>
<dbReference type="NCBIfam" id="NF004745">
    <property type="entry name" value="PRK06076.1-6"/>
    <property type="match status" value="1"/>
</dbReference>
<dbReference type="PANTHER" id="PTHR11432">
    <property type="entry name" value="NADH DEHYDROGENASE SUBUNIT 1"/>
    <property type="match status" value="1"/>
</dbReference>
<dbReference type="PANTHER" id="PTHR11432:SF3">
    <property type="entry name" value="NADH-UBIQUINONE OXIDOREDUCTASE CHAIN 1"/>
    <property type="match status" value="1"/>
</dbReference>
<dbReference type="Pfam" id="PF00146">
    <property type="entry name" value="NADHdh"/>
    <property type="match status" value="1"/>
</dbReference>
<dbReference type="PROSITE" id="PS00668">
    <property type="entry name" value="COMPLEX1_ND1_2"/>
    <property type="match status" value="1"/>
</dbReference>
<accession>Q9A6Y1</accession>
<protein>
    <recommendedName>
        <fullName evidence="1">NADH-quinone oxidoreductase subunit H</fullName>
        <ecNumber evidence="1">7.1.1.-</ecNumber>
    </recommendedName>
    <alternativeName>
        <fullName evidence="1">NADH dehydrogenase I subunit H</fullName>
    </alternativeName>
    <alternativeName>
        <fullName evidence="1">NDH-1 subunit H</fullName>
    </alternativeName>
</protein>
<reference key="1">
    <citation type="journal article" date="2001" name="Proc. Natl. Acad. Sci. U.S.A.">
        <title>Complete genome sequence of Caulobacter crescentus.</title>
        <authorList>
            <person name="Nierman W.C."/>
            <person name="Feldblyum T.V."/>
            <person name="Laub M.T."/>
            <person name="Paulsen I.T."/>
            <person name="Nelson K.E."/>
            <person name="Eisen J.A."/>
            <person name="Heidelberg J.F."/>
            <person name="Alley M.R.K."/>
            <person name="Ohta N."/>
            <person name="Maddock J.R."/>
            <person name="Potocka I."/>
            <person name="Nelson W.C."/>
            <person name="Newton A."/>
            <person name="Stephens C."/>
            <person name="Phadke N.D."/>
            <person name="Ely B."/>
            <person name="DeBoy R.T."/>
            <person name="Dodson R.J."/>
            <person name="Durkin A.S."/>
            <person name="Gwinn M.L."/>
            <person name="Haft D.H."/>
            <person name="Kolonay J.F."/>
            <person name="Smit J."/>
            <person name="Craven M.B."/>
            <person name="Khouri H.M."/>
            <person name="Shetty J."/>
            <person name="Berry K.J."/>
            <person name="Utterback T.R."/>
            <person name="Tran K."/>
            <person name="Wolf A.M."/>
            <person name="Vamathevan J.J."/>
            <person name="Ermolaeva M.D."/>
            <person name="White O."/>
            <person name="Salzberg S.L."/>
            <person name="Venter J.C."/>
            <person name="Shapiro L."/>
            <person name="Fraser C.M."/>
        </authorList>
    </citation>
    <scope>NUCLEOTIDE SEQUENCE [LARGE SCALE GENOMIC DNA]</scope>
    <source>
        <strain>ATCC 19089 / CIP 103742 / CB 15</strain>
    </source>
</reference>
<name>NUOH_CAUVC</name>
<proteinExistence type="inferred from homology"/>
<evidence type="ECO:0000255" key="1">
    <source>
        <dbReference type="HAMAP-Rule" id="MF_01350"/>
    </source>
</evidence>